<feature type="chain" id="PRO_0000294137" description="Pyruvate kinase">
    <location>
        <begin position="1"/>
        <end position="585"/>
    </location>
</feature>
<feature type="binding site" evidence="1">
    <location>
        <position position="32"/>
    </location>
    <ligand>
        <name>substrate</name>
    </ligand>
</feature>
<feature type="binding site" evidence="2">
    <location>
        <begin position="34"/>
        <end position="37"/>
    </location>
    <ligand>
        <name>ATP</name>
        <dbReference type="ChEBI" id="CHEBI:30616"/>
    </ligand>
</feature>
<feature type="binding site" evidence="1">
    <location>
        <position position="34"/>
    </location>
    <ligand>
        <name>K(+)</name>
        <dbReference type="ChEBI" id="CHEBI:29103"/>
    </ligand>
</feature>
<feature type="binding site" evidence="1">
    <location>
        <position position="36"/>
    </location>
    <ligand>
        <name>K(+)</name>
        <dbReference type="ChEBI" id="CHEBI:29103"/>
    </ligand>
</feature>
<feature type="binding site" evidence="1">
    <location>
        <position position="66"/>
    </location>
    <ligand>
        <name>K(+)</name>
        <dbReference type="ChEBI" id="CHEBI:29103"/>
    </ligand>
</feature>
<feature type="binding site" evidence="1">
    <location>
        <position position="67"/>
    </location>
    <ligand>
        <name>K(+)</name>
        <dbReference type="ChEBI" id="CHEBI:29103"/>
    </ligand>
</feature>
<feature type="binding site" evidence="2">
    <location>
        <position position="73"/>
    </location>
    <ligand>
        <name>ATP</name>
        <dbReference type="ChEBI" id="CHEBI:30616"/>
    </ligand>
</feature>
<feature type="binding site" evidence="2">
    <location>
        <position position="156"/>
    </location>
    <ligand>
        <name>ATP</name>
        <dbReference type="ChEBI" id="CHEBI:30616"/>
    </ligand>
</feature>
<feature type="binding site" evidence="1">
    <location>
        <position position="221"/>
    </location>
    <ligand>
        <name>Mg(2+)</name>
        <dbReference type="ChEBI" id="CHEBI:18420"/>
    </ligand>
</feature>
<feature type="binding site" evidence="1">
    <location>
        <position position="244"/>
    </location>
    <ligand>
        <name>substrate</name>
    </ligand>
</feature>
<feature type="binding site" evidence="1">
    <location>
        <position position="245"/>
    </location>
    <ligand>
        <name>Mg(2+)</name>
        <dbReference type="ChEBI" id="CHEBI:18420"/>
    </ligand>
</feature>
<feature type="binding site" evidence="1">
    <location>
        <position position="245"/>
    </location>
    <ligand>
        <name>substrate</name>
    </ligand>
</feature>
<feature type="binding site" evidence="1">
    <location>
        <position position="277"/>
    </location>
    <ligand>
        <name>substrate</name>
    </ligand>
</feature>
<feature type="site" description="Transition state stabilizer" evidence="1">
    <location>
        <position position="219"/>
    </location>
</feature>
<name>KPYK_STAES</name>
<comment type="catalytic activity">
    <reaction>
        <text>pyruvate + ATP = phosphoenolpyruvate + ADP + H(+)</text>
        <dbReference type="Rhea" id="RHEA:18157"/>
        <dbReference type="ChEBI" id="CHEBI:15361"/>
        <dbReference type="ChEBI" id="CHEBI:15378"/>
        <dbReference type="ChEBI" id="CHEBI:30616"/>
        <dbReference type="ChEBI" id="CHEBI:58702"/>
        <dbReference type="ChEBI" id="CHEBI:456216"/>
        <dbReference type="EC" id="2.7.1.40"/>
    </reaction>
</comment>
<comment type="cofactor">
    <cofactor evidence="1">
        <name>Mg(2+)</name>
        <dbReference type="ChEBI" id="CHEBI:18420"/>
    </cofactor>
</comment>
<comment type="cofactor">
    <cofactor evidence="1">
        <name>K(+)</name>
        <dbReference type="ChEBI" id="CHEBI:29103"/>
    </cofactor>
</comment>
<comment type="pathway">
    <text>Carbohydrate degradation; glycolysis; pyruvate from D-glyceraldehyde 3-phosphate: step 5/5.</text>
</comment>
<comment type="similarity">
    <text evidence="3">Belongs to the pyruvate kinase family.</text>
</comment>
<comment type="similarity">
    <text evidence="3">In the C-terminal section; belongs to the PEP-utilizing enzyme family.</text>
</comment>
<accession>Q8CS69</accession>
<sequence>MRKTKIVCTIGPASESEEMLEKLMNAGMNVARLNFSHGSHEEHKARIDTIRKVAKRLNKTIGLLLDTKGPEIRTHNMKDGLIVLEKGKEVIVSMNEVEGTPEKFSVTYENLINDVNIGSYILLDDGLVELQVKEINKDKGEVKCDILNTGELKNKKGVNLPGVKVNLPGITDKDADDIRFGIKENVDFIAASFVRRPSDVLDIRQILEEEKAEITIFPKIENQEGIDNIEEILEVSDGLMVARGDMGVEIPPESVPMVQKDLIRKCNKLGKPVITATQMLDSMQRNPRATRAEASDVANAIYDGTDAVMLSGETAAGQYPEEAVKTMRNIAVSAEAAQDYKKLLSDRTKLVETSLVNAIGVSVAHTALNLNVKAIVAATESGSTARTISKYRPHSDIIAVTPSEKTARQCAIVWGVNPVVKEGRKTTDALLNNAVATAVETGRVSNGDLIIITAGVPTGEKGTTNMMKIHLVGDEIAKGQGVGRGSVVGHAIVADSASDLEGKDLSDKVIITNSVDETLVPYVEKAIGLITEENGITSPSAIIGLEKGIPTVVGVEQATKEIKNDMLVTLDASQGKVFEGYANVL</sequence>
<dbReference type="EC" id="2.7.1.40"/>
<dbReference type="EMBL" id="AE015929">
    <property type="protein sequence ID" value="AAO04972.1"/>
    <property type="molecule type" value="Genomic_DNA"/>
</dbReference>
<dbReference type="RefSeq" id="NP_764928.1">
    <property type="nucleotide sequence ID" value="NC_004461.1"/>
</dbReference>
<dbReference type="RefSeq" id="WP_001830831.1">
    <property type="nucleotide sequence ID" value="NZ_WBME01000042.1"/>
</dbReference>
<dbReference type="SMR" id="Q8CS69"/>
<dbReference type="GeneID" id="50018513"/>
<dbReference type="KEGG" id="sep:SE_1373"/>
<dbReference type="PATRIC" id="fig|176280.10.peg.1341"/>
<dbReference type="eggNOG" id="COG0469">
    <property type="taxonomic scope" value="Bacteria"/>
</dbReference>
<dbReference type="HOGENOM" id="CLU_015439_0_2_9"/>
<dbReference type="OrthoDB" id="9812123at2"/>
<dbReference type="UniPathway" id="UPA00109">
    <property type="reaction ID" value="UER00188"/>
</dbReference>
<dbReference type="Proteomes" id="UP000001411">
    <property type="component" value="Chromosome"/>
</dbReference>
<dbReference type="GO" id="GO:0005524">
    <property type="term" value="F:ATP binding"/>
    <property type="evidence" value="ECO:0007669"/>
    <property type="project" value="UniProtKB-KW"/>
</dbReference>
<dbReference type="GO" id="GO:0016301">
    <property type="term" value="F:kinase activity"/>
    <property type="evidence" value="ECO:0007669"/>
    <property type="project" value="UniProtKB-KW"/>
</dbReference>
<dbReference type="GO" id="GO:0000287">
    <property type="term" value="F:magnesium ion binding"/>
    <property type="evidence" value="ECO:0007669"/>
    <property type="project" value="InterPro"/>
</dbReference>
<dbReference type="GO" id="GO:0030955">
    <property type="term" value="F:potassium ion binding"/>
    <property type="evidence" value="ECO:0007669"/>
    <property type="project" value="InterPro"/>
</dbReference>
<dbReference type="GO" id="GO:0004743">
    <property type="term" value="F:pyruvate kinase activity"/>
    <property type="evidence" value="ECO:0007669"/>
    <property type="project" value="UniProtKB-EC"/>
</dbReference>
<dbReference type="FunFam" id="2.40.33.10:FF:000001">
    <property type="entry name" value="Pyruvate kinase"/>
    <property type="match status" value="1"/>
</dbReference>
<dbReference type="FunFam" id="3.20.20.60:FF:000001">
    <property type="entry name" value="Pyruvate kinase"/>
    <property type="match status" value="1"/>
</dbReference>
<dbReference type="FunFam" id="3.40.1380.20:FF:000017">
    <property type="entry name" value="Pyruvate kinase"/>
    <property type="match status" value="1"/>
</dbReference>
<dbReference type="Gene3D" id="3.20.20.60">
    <property type="entry name" value="Phosphoenolpyruvate-binding domains"/>
    <property type="match status" value="1"/>
</dbReference>
<dbReference type="Gene3D" id="3.50.30.10">
    <property type="entry name" value="Phosphohistidine domain"/>
    <property type="match status" value="1"/>
</dbReference>
<dbReference type="Gene3D" id="2.40.33.10">
    <property type="entry name" value="PK beta-barrel domain-like"/>
    <property type="match status" value="1"/>
</dbReference>
<dbReference type="Gene3D" id="3.40.1380.20">
    <property type="entry name" value="Pyruvate kinase, C-terminal domain"/>
    <property type="match status" value="1"/>
</dbReference>
<dbReference type="InterPro" id="IPR008279">
    <property type="entry name" value="PEP-util_enz_mobile_dom"/>
</dbReference>
<dbReference type="InterPro" id="IPR036637">
    <property type="entry name" value="Phosphohistidine_dom_sf"/>
</dbReference>
<dbReference type="InterPro" id="IPR001697">
    <property type="entry name" value="Pyr_Knase"/>
</dbReference>
<dbReference type="InterPro" id="IPR015813">
    <property type="entry name" value="Pyrv/PenolPyrv_kinase-like_dom"/>
</dbReference>
<dbReference type="InterPro" id="IPR040442">
    <property type="entry name" value="Pyrv_kinase-like_dom_sf"/>
</dbReference>
<dbReference type="InterPro" id="IPR011037">
    <property type="entry name" value="Pyrv_Knase-like_insert_dom_sf"/>
</dbReference>
<dbReference type="InterPro" id="IPR015793">
    <property type="entry name" value="Pyrv_Knase_brl"/>
</dbReference>
<dbReference type="InterPro" id="IPR015795">
    <property type="entry name" value="Pyrv_Knase_C"/>
</dbReference>
<dbReference type="InterPro" id="IPR036918">
    <property type="entry name" value="Pyrv_Knase_C_sf"/>
</dbReference>
<dbReference type="InterPro" id="IPR015806">
    <property type="entry name" value="Pyrv_Knase_insert_dom_sf"/>
</dbReference>
<dbReference type="NCBIfam" id="NF004491">
    <property type="entry name" value="PRK05826.1"/>
    <property type="match status" value="1"/>
</dbReference>
<dbReference type="NCBIfam" id="NF004978">
    <property type="entry name" value="PRK06354.1"/>
    <property type="match status" value="1"/>
</dbReference>
<dbReference type="NCBIfam" id="TIGR01064">
    <property type="entry name" value="pyruv_kin"/>
    <property type="match status" value="1"/>
</dbReference>
<dbReference type="PANTHER" id="PTHR11817">
    <property type="entry name" value="PYRUVATE KINASE"/>
    <property type="match status" value="1"/>
</dbReference>
<dbReference type="Pfam" id="PF00391">
    <property type="entry name" value="PEP-utilizers"/>
    <property type="match status" value="1"/>
</dbReference>
<dbReference type="Pfam" id="PF00224">
    <property type="entry name" value="PK"/>
    <property type="match status" value="1"/>
</dbReference>
<dbReference type="Pfam" id="PF02887">
    <property type="entry name" value="PK_C"/>
    <property type="match status" value="1"/>
</dbReference>
<dbReference type="PRINTS" id="PR01050">
    <property type="entry name" value="PYRUVTKNASE"/>
</dbReference>
<dbReference type="SUPFAM" id="SSF51621">
    <property type="entry name" value="Phosphoenolpyruvate/pyruvate domain"/>
    <property type="match status" value="1"/>
</dbReference>
<dbReference type="SUPFAM" id="SSF52009">
    <property type="entry name" value="Phosphohistidine domain"/>
    <property type="match status" value="1"/>
</dbReference>
<dbReference type="SUPFAM" id="SSF50800">
    <property type="entry name" value="PK beta-barrel domain-like"/>
    <property type="match status" value="1"/>
</dbReference>
<dbReference type="SUPFAM" id="SSF52935">
    <property type="entry name" value="PK C-terminal domain-like"/>
    <property type="match status" value="1"/>
</dbReference>
<protein>
    <recommendedName>
        <fullName>Pyruvate kinase</fullName>
        <shortName>PK</shortName>
        <ecNumber>2.7.1.40</ecNumber>
    </recommendedName>
</protein>
<organism>
    <name type="scientific">Staphylococcus epidermidis (strain ATCC 12228 / FDA PCI 1200)</name>
    <dbReference type="NCBI Taxonomy" id="176280"/>
    <lineage>
        <taxon>Bacteria</taxon>
        <taxon>Bacillati</taxon>
        <taxon>Bacillota</taxon>
        <taxon>Bacilli</taxon>
        <taxon>Bacillales</taxon>
        <taxon>Staphylococcaceae</taxon>
        <taxon>Staphylococcus</taxon>
    </lineage>
</organism>
<proteinExistence type="inferred from homology"/>
<evidence type="ECO:0000250" key="1"/>
<evidence type="ECO:0000250" key="2">
    <source>
        <dbReference type="UniProtKB" id="P14618"/>
    </source>
</evidence>
<evidence type="ECO:0000305" key="3"/>
<reference key="1">
    <citation type="journal article" date="2003" name="Mol. Microbiol.">
        <title>Genome-based analysis of virulence genes in a non-biofilm-forming Staphylococcus epidermidis strain (ATCC 12228).</title>
        <authorList>
            <person name="Zhang Y.-Q."/>
            <person name="Ren S.-X."/>
            <person name="Li H.-L."/>
            <person name="Wang Y.-X."/>
            <person name="Fu G."/>
            <person name="Yang J."/>
            <person name="Qin Z.-Q."/>
            <person name="Miao Y.-G."/>
            <person name="Wang W.-Y."/>
            <person name="Chen R.-S."/>
            <person name="Shen Y."/>
            <person name="Chen Z."/>
            <person name="Yuan Z.-H."/>
            <person name="Zhao G.-P."/>
            <person name="Qu D."/>
            <person name="Danchin A."/>
            <person name="Wen Y.-M."/>
        </authorList>
    </citation>
    <scope>NUCLEOTIDE SEQUENCE [LARGE SCALE GENOMIC DNA]</scope>
    <source>
        <strain>ATCC 12228 / FDA PCI 1200</strain>
    </source>
</reference>
<gene>
    <name type="primary">pyk</name>
    <name type="ordered locus">SE_1373</name>
</gene>
<keyword id="KW-0067">ATP-binding</keyword>
<keyword id="KW-0324">Glycolysis</keyword>
<keyword id="KW-0418">Kinase</keyword>
<keyword id="KW-0460">Magnesium</keyword>
<keyword id="KW-0479">Metal-binding</keyword>
<keyword id="KW-0547">Nucleotide-binding</keyword>
<keyword id="KW-0630">Potassium</keyword>
<keyword id="KW-0670">Pyruvate</keyword>
<keyword id="KW-0808">Transferase</keyword>